<evidence type="ECO:0000250" key="1"/>
<evidence type="ECO:0000250" key="2">
    <source>
        <dbReference type="UniProtKB" id="P43286"/>
    </source>
</evidence>
<evidence type="ECO:0000250" key="3">
    <source>
        <dbReference type="UniProtKB" id="P61837"/>
    </source>
</evidence>
<evidence type="ECO:0000255" key="4"/>
<evidence type="ECO:0000269" key="5">
    <source>
    </source>
</evidence>
<evidence type="ECO:0000269" key="6">
    <source>
    </source>
</evidence>
<evidence type="ECO:0000269" key="7">
    <source>
    </source>
</evidence>
<evidence type="ECO:0000305" key="8"/>
<gene>
    <name type="primary">TIP2-2</name>
    <name type="ordered locus">At4g17340</name>
    <name type="ORF">dl4705w</name>
    <name type="ORF">FCAALL.412</name>
</gene>
<organism>
    <name type="scientific">Arabidopsis thaliana</name>
    <name type="common">Mouse-ear cress</name>
    <dbReference type="NCBI Taxonomy" id="3702"/>
    <lineage>
        <taxon>Eukaryota</taxon>
        <taxon>Viridiplantae</taxon>
        <taxon>Streptophyta</taxon>
        <taxon>Embryophyta</taxon>
        <taxon>Tracheophyta</taxon>
        <taxon>Spermatophyta</taxon>
        <taxon>Magnoliopsida</taxon>
        <taxon>eudicotyledons</taxon>
        <taxon>Gunneridae</taxon>
        <taxon>Pentapetalae</taxon>
        <taxon>rosids</taxon>
        <taxon>malvids</taxon>
        <taxon>Brassicales</taxon>
        <taxon>Brassicaceae</taxon>
        <taxon>Camelineae</taxon>
        <taxon>Arabidopsis</taxon>
    </lineage>
</organism>
<proteinExistence type="evidence at protein level"/>
<reference key="1">
    <citation type="journal article" date="1998" name="Nature">
        <title>Analysis of 1.9 Mb of contiguous sequence from chromosome 4 of Arabidopsis thaliana.</title>
        <authorList>
            <person name="Bevan M."/>
            <person name="Bancroft I."/>
            <person name="Bent E."/>
            <person name="Love K."/>
            <person name="Goodman H.M."/>
            <person name="Dean C."/>
            <person name="Bergkamp R."/>
            <person name="Dirkse W."/>
            <person name="van Staveren M."/>
            <person name="Stiekema W."/>
            <person name="Drost L."/>
            <person name="Ridley P."/>
            <person name="Hudson S.-A."/>
            <person name="Patel K."/>
            <person name="Murphy G."/>
            <person name="Piffanelli P."/>
            <person name="Wedler H."/>
            <person name="Wedler E."/>
            <person name="Wambutt R."/>
            <person name="Weitzenegger T."/>
            <person name="Pohl T."/>
            <person name="Terryn N."/>
            <person name="Gielen J."/>
            <person name="Villarroel R."/>
            <person name="De Clercq R."/>
            <person name="van Montagu M."/>
            <person name="Lecharny A."/>
            <person name="Aubourg S."/>
            <person name="Gy I."/>
            <person name="Kreis M."/>
            <person name="Lao N."/>
            <person name="Kavanagh T."/>
            <person name="Hempel S."/>
            <person name="Kotter P."/>
            <person name="Entian K.-D."/>
            <person name="Rieger M."/>
            <person name="Schaefer M."/>
            <person name="Funk B."/>
            <person name="Mueller-Auer S."/>
            <person name="Silvey M."/>
            <person name="James R."/>
            <person name="Monfort A."/>
            <person name="Pons A."/>
            <person name="Puigdomenech P."/>
            <person name="Douka A."/>
            <person name="Voukelatou E."/>
            <person name="Milioni D."/>
            <person name="Hatzopoulos P."/>
            <person name="Piravandi E."/>
            <person name="Obermaier B."/>
            <person name="Hilbert H."/>
            <person name="Duesterhoeft A."/>
            <person name="Moores T."/>
            <person name="Jones J.D.G."/>
            <person name="Eneva T."/>
            <person name="Palme K."/>
            <person name="Benes V."/>
            <person name="Rechmann S."/>
            <person name="Ansorge W."/>
            <person name="Cooke R."/>
            <person name="Berger C."/>
            <person name="Delseny M."/>
            <person name="Voet M."/>
            <person name="Volckaert G."/>
            <person name="Mewes H.-W."/>
            <person name="Klosterman S."/>
            <person name="Schueller C."/>
            <person name="Chalwatzis N."/>
        </authorList>
    </citation>
    <scope>NUCLEOTIDE SEQUENCE [LARGE SCALE GENOMIC DNA]</scope>
    <source>
        <strain>cv. Columbia</strain>
    </source>
</reference>
<reference key="2">
    <citation type="journal article" date="1999" name="Nature">
        <title>Sequence and analysis of chromosome 4 of the plant Arabidopsis thaliana.</title>
        <authorList>
            <person name="Mayer K.F.X."/>
            <person name="Schueller C."/>
            <person name="Wambutt R."/>
            <person name="Murphy G."/>
            <person name="Volckaert G."/>
            <person name="Pohl T."/>
            <person name="Duesterhoeft A."/>
            <person name="Stiekema W."/>
            <person name="Entian K.-D."/>
            <person name="Terryn N."/>
            <person name="Harris B."/>
            <person name="Ansorge W."/>
            <person name="Brandt P."/>
            <person name="Grivell L.A."/>
            <person name="Rieger M."/>
            <person name="Weichselgartner M."/>
            <person name="de Simone V."/>
            <person name="Obermaier B."/>
            <person name="Mache R."/>
            <person name="Mueller M."/>
            <person name="Kreis M."/>
            <person name="Delseny M."/>
            <person name="Puigdomenech P."/>
            <person name="Watson M."/>
            <person name="Schmidtheini T."/>
            <person name="Reichert B."/>
            <person name="Portetelle D."/>
            <person name="Perez-Alonso M."/>
            <person name="Boutry M."/>
            <person name="Bancroft I."/>
            <person name="Vos P."/>
            <person name="Hoheisel J."/>
            <person name="Zimmermann W."/>
            <person name="Wedler H."/>
            <person name="Ridley P."/>
            <person name="Langham S.-A."/>
            <person name="McCullagh B."/>
            <person name="Bilham L."/>
            <person name="Robben J."/>
            <person name="van der Schueren J."/>
            <person name="Grymonprez B."/>
            <person name="Chuang Y.-J."/>
            <person name="Vandenbussche F."/>
            <person name="Braeken M."/>
            <person name="Weltjens I."/>
            <person name="Voet M."/>
            <person name="Bastiaens I."/>
            <person name="Aert R."/>
            <person name="Defoor E."/>
            <person name="Weitzenegger T."/>
            <person name="Bothe G."/>
            <person name="Ramsperger U."/>
            <person name="Hilbert H."/>
            <person name="Braun M."/>
            <person name="Holzer E."/>
            <person name="Brandt A."/>
            <person name="Peters S."/>
            <person name="van Staveren M."/>
            <person name="Dirkse W."/>
            <person name="Mooijman P."/>
            <person name="Klein Lankhorst R."/>
            <person name="Rose M."/>
            <person name="Hauf J."/>
            <person name="Koetter P."/>
            <person name="Berneiser S."/>
            <person name="Hempel S."/>
            <person name="Feldpausch M."/>
            <person name="Lamberth S."/>
            <person name="Van den Daele H."/>
            <person name="De Keyser A."/>
            <person name="Buysshaert C."/>
            <person name="Gielen J."/>
            <person name="Villarroel R."/>
            <person name="De Clercq R."/>
            <person name="van Montagu M."/>
            <person name="Rogers J."/>
            <person name="Cronin A."/>
            <person name="Quail M.A."/>
            <person name="Bray-Allen S."/>
            <person name="Clark L."/>
            <person name="Doggett J."/>
            <person name="Hall S."/>
            <person name="Kay M."/>
            <person name="Lennard N."/>
            <person name="McLay K."/>
            <person name="Mayes R."/>
            <person name="Pettett A."/>
            <person name="Rajandream M.A."/>
            <person name="Lyne M."/>
            <person name="Benes V."/>
            <person name="Rechmann S."/>
            <person name="Borkova D."/>
            <person name="Bloecker H."/>
            <person name="Scharfe M."/>
            <person name="Grimm M."/>
            <person name="Loehnert T.-H."/>
            <person name="Dose S."/>
            <person name="de Haan M."/>
            <person name="Maarse A.C."/>
            <person name="Schaefer M."/>
            <person name="Mueller-Auer S."/>
            <person name="Gabel C."/>
            <person name="Fuchs M."/>
            <person name="Fartmann B."/>
            <person name="Granderath K."/>
            <person name="Dauner D."/>
            <person name="Herzl A."/>
            <person name="Neumann S."/>
            <person name="Argiriou A."/>
            <person name="Vitale D."/>
            <person name="Liguori R."/>
            <person name="Piravandi E."/>
            <person name="Massenet O."/>
            <person name="Quigley F."/>
            <person name="Clabauld G."/>
            <person name="Muendlein A."/>
            <person name="Felber R."/>
            <person name="Schnabl S."/>
            <person name="Hiller R."/>
            <person name="Schmidt W."/>
            <person name="Lecharny A."/>
            <person name="Aubourg S."/>
            <person name="Chefdor F."/>
            <person name="Cooke R."/>
            <person name="Berger C."/>
            <person name="Monfort A."/>
            <person name="Casacuberta E."/>
            <person name="Gibbons T."/>
            <person name="Weber N."/>
            <person name="Vandenbol M."/>
            <person name="Bargues M."/>
            <person name="Terol J."/>
            <person name="Torres A."/>
            <person name="Perez-Perez A."/>
            <person name="Purnelle B."/>
            <person name="Bent E."/>
            <person name="Johnson S."/>
            <person name="Tacon D."/>
            <person name="Jesse T."/>
            <person name="Heijnen L."/>
            <person name="Schwarz S."/>
            <person name="Scholler P."/>
            <person name="Heber S."/>
            <person name="Francs P."/>
            <person name="Bielke C."/>
            <person name="Frishman D."/>
            <person name="Haase D."/>
            <person name="Lemcke K."/>
            <person name="Mewes H.-W."/>
            <person name="Stocker S."/>
            <person name="Zaccaria P."/>
            <person name="Bevan M."/>
            <person name="Wilson R.K."/>
            <person name="de la Bastide M."/>
            <person name="Habermann K."/>
            <person name="Parnell L."/>
            <person name="Dedhia N."/>
            <person name="Gnoj L."/>
            <person name="Schutz K."/>
            <person name="Huang E."/>
            <person name="Spiegel L."/>
            <person name="Sekhon M."/>
            <person name="Murray J."/>
            <person name="Sheet P."/>
            <person name="Cordes M."/>
            <person name="Abu-Threideh J."/>
            <person name="Stoneking T."/>
            <person name="Kalicki J."/>
            <person name="Graves T."/>
            <person name="Harmon G."/>
            <person name="Edwards J."/>
            <person name="Latreille P."/>
            <person name="Courtney L."/>
            <person name="Cloud J."/>
            <person name="Abbott A."/>
            <person name="Scott K."/>
            <person name="Johnson D."/>
            <person name="Minx P."/>
            <person name="Bentley D."/>
            <person name="Fulton B."/>
            <person name="Miller N."/>
            <person name="Greco T."/>
            <person name="Kemp K."/>
            <person name="Kramer J."/>
            <person name="Fulton L."/>
            <person name="Mardis E."/>
            <person name="Dante M."/>
            <person name="Pepin K."/>
            <person name="Hillier L.W."/>
            <person name="Nelson J."/>
            <person name="Spieth J."/>
            <person name="Ryan E."/>
            <person name="Andrews S."/>
            <person name="Geisel C."/>
            <person name="Layman D."/>
            <person name="Du H."/>
            <person name="Ali J."/>
            <person name="Berghoff A."/>
            <person name="Jones K."/>
            <person name="Drone K."/>
            <person name="Cotton M."/>
            <person name="Joshu C."/>
            <person name="Antonoiu B."/>
            <person name="Zidanic M."/>
            <person name="Strong C."/>
            <person name="Sun H."/>
            <person name="Lamar B."/>
            <person name="Yordan C."/>
            <person name="Ma P."/>
            <person name="Zhong J."/>
            <person name="Preston R."/>
            <person name="Vil D."/>
            <person name="Shekher M."/>
            <person name="Matero A."/>
            <person name="Shah R."/>
            <person name="Swaby I.K."/>
            <person name="O'Shaughnessy A."/>
            <person name="Rodriguez M."/>
            <person name="Hoffman J."/>
            <person name="Till S."/>
            <person name="Granat S."/>
            <person name="Shohdy N."/>
            <person name="Hasegawa A."/>
            <person name="Hameed A."/>
            <person name="Lodhi M."/>
            <person name="Johnson A."/>
            <person name="Chen E."/>
            <person name="Marra M.A."/>
            <person name="Martienssen R."/>
            <person name="McCombie W.R."/>
        </authorList>
    </citation>
    <scope>NUCLEOTIDE SEQUENCE [LARGE SCALE GENOMIC DNA]</scope>
    <source>
        <strain>cv. Columbia</strain>
    </source>
</reference>
<reference key="3">
    <citation type="journal article" date="2017" name="Plant J.">
        <title>Araport11: a complete reannotation of the Arabidopsis thaliana reference genome.</title>
        <authorList>
            <person name="Cheng C.Y."/>
            <person name="Krishnakumar V."/>
            <person name="Chan A.P."/>
            <person name="Thibaud-Nissen F."/>
            <person name="Schobel S."/>
            <person name="Town C.D."/>
        </authorList>
    </citation>
    <scope>GENOME REANNOTATION</scope>
    <source>
        <strain>cv. Columbia</strain>
    </source>
</reference>
<reference key="4">
    <citation type="journal article" date="2003" name="Science">
        <title>Empirical analysis of transcriptional activity in the Arabidopsis genome.</title>
        <authorList>
            <person name="Yamada K."/>
            <person name="Lim J."/>
            <person name="Dale J.M."/>
            <person name="Chen H."/>
            <person name="Shinn P."/>
            <person name="Palm C.J."/>
            <person name="Southwick A.M."/>
            <person name="Wu H.C."/>
            <person name="Kim C.J."/>
            <person name="Nguyen M."/>
            <person name="Pham P.K."/>
            <person name="Cheuk R.F."/>
            <person name="Karlin-Newmann G."/>
            <person name="Liu S.X."/>
            <person name="Lam B."/>
            <person name="Sakano H."/>
            <person name="Wu T."/>
            <person name="Yu G."/>
            <person name="Miranda M."/>
            <person name="Quach H.L."/>
            <person name="Tripp M."/>
            <person name="Chang C.H."/>
            <person name="Lee J.M."/>
            <person name="Toriumi M.J."/>
            <person name="Chan M.M."/>
            <person name="Tang C.C."/>
            <person name="Onodera C.S."/>
            <person name="Deng J.M."/>
            <person name="Akiyama K."/>
            <person name="Ansari Y."/>
            <person name="Arakawa T."/>
            <person name="Banh J."/>
            <person name="Banno F."/>
            <person name="Bowser L."/>
            <person name="Brooks S.Y."/>
            <person name="Carninci P."/>
            <person name="Chao Q."/>
            <person name="Choy N."/>
            <person name="Enju A."/>
            <person name="Goldsmith A.D."/>
            <person name="Gurjal M."/>
            <person name="Hansen N.F."/>
            <person name="Hayashizaki Y."/>
            <person name="Johnson-Hopson C."/>
            <person name="Hsuan V.W."/>
            <person name="Iida K."/>
            <person name="Karnes M."/>
            <person name="Khan S."/>
            <person name="Koesema E."/>
            <person name="Ishida J."/>
            <person name="Jiang P.X."/>
            <person name="Jones T."/>
            <person name="Kawai J."/>
            <person name="Kamiya A."/>
            <person name="Meyers C."/>
            <person name="Nakajima M."/>
            <person name="Narusaka M."/>
            <person name="Seki M."/>
            <person name="Sakurai T."/>
            <person name="Satou M."/>
            <person name="Tamse R."/>
            <person name="Vaysberg M."/>
            <person name="Wallender E.K."/>
            <person name="Wong C."/>
            <person name="Yamamura Y."/>
            <person name="Yuan S."/>
            <person name="Shinozaki K."/>
            <person name="Davis R.W."/>
            <person name="Theologis A."/>
            <person name="Ecker J.R."/>
        </authorList>
    </citation>
    <scope>NUCLEOTIDE SEQUENCE [LARGE SCALE MRNA]</scope>
    <source>
        <strain>cv. Columbia</strain>
    </source>
</reference>
<reference key="5">
    <citation type="submission" date="2002-03" db="EMBL/GenBank/DDBJ databases">
        <title>Full-length cDNA from Arabidopsis thaliana.</title>
        <authorList>
            <person name="Brover V.V."/>
            <person name="Troukhan M.E."/>
            <person name="Alexandrov N.A."/>
            <person name="Lu Y.-P."/>
            <person name="Flavell R.B."/>
            <person name="Feldmann K.A."/>
        </authorList>
    </citation>
    <scope>NUCLEOTIDE SEQUENCE [LARGE SCALE MRNA]</scope>
</reference>
<reference key="6">
    <citation type="journal article" date="1993" name="Plant J.">
        <title>An inventory of 1152 expressed sequence tags obtained by partial sequencing of cDNAs from Arabidopsis thaliana.</title>
        <authorList>
            <person name="Hoefte H."/>
            <person name="Desprez T."/>
            <person name="Amselem J."/>
            <person name="Chiapello H."/>
            <person name="Rouze P."/>
            <person name="Caboche M."/>
            <person name="Moisan A."/>
            <person name="Jourjon M.-F."/>
            <person name="Charpenteau J.-L."/>
            <person name="Berthomieu P."/>
            <person name="Guerrier D."/>
            <person name="Giraudat J."/>
            <person name="Quigley F."/>
            <person name="Thomas F."/>
            <person name="Yu D.-Y."/>
            <person name="Mache R."/>
            <person name="Raynal M."/>
            <person name="Cooke R."/>
            <person name="Grellet F."/>
            <person name="Delseny M."/>
            <person name="Parmentier Y."/>
            <person name="de Marcillac G."/>
            <person name="Gigot C."/>
            <person name="Fleck J."/>
            <person name="Philipps G."/>
            <person name="Axelos M."/>
            <person name="Bardet C."/>
            <person name="Tremousaygue D."/>
            <person name="Lescure B."/>
        </authorList>
    </citation>
    <scope>NUCLEOTIDE SEQUENCE [LARGE SCALE MRNA] OF 1-110</scope>
    <source>
        <strain>cv. Columbia</strain>
        <tissue>Seedling</tissue>
    </source>
</reference>
<reference key="7">
    <citation type="journal article" date="2000" name="Proc. Natl. Acad. Sci. U.S.A.">
        <title>Random GFP::cDNA fusions enable visualization of subcellular structures in cells of Arabidopsis at a high frequency.</title>
        <authorList>
            <person name="Cutler S.R."/>
            <person name="Ehrhardt D.W."/>
            <person name="Griffitts J.S."/>
            <person name="Somerville C.R."/>
        </authorList>
    </citation>
    <scope>SUBCELLULAR LOCATION</scope>
</reference>
<reference key="8">
    <citation type="journal article" date="2002" name="Genome Biol.">
        <title>From genome to function: the Arabidopsis aquaporins.</title>
        <authorList>
            <person name="Quigley F."/>
            <person name="Rosenberg J.M."/>
            <person name="Shachar-Hill Y."/>
            <person name="Bohnert H.J."/>
        </authorList>
    </citation>
    <scope>NOMENCLATURE</scope>
    <scope>TISSUE SPECIFICITY</scope>
</reference>
<reference key="9">
    <citation type="journal article" date="2006" name="J. Gen. Virol.">
        <title>Arabidopsis tonoplast proteins TIP1 and TIP2 interact with the cucumber mosaic virus 1a replication protein.</title>
        <authorList>
            <person name="Kim M.J."/>
            <person name="Kim H.R."/>
            <person name="Paek K.-H."/>
        </authorList>
    </citation>
    <scope>INTERACTION WITH CMV PROTEIN 1A</scope>
</reference>
<sequence length="250" mass="25080">MVKIEIGSVGDSFSVASLKAYLSEFIATLLFVFAGVGSALAFAKLTSDAALDPAGLVAVAVAHAFALFVGVSIAANISGGHLNPAVTLGLAVGGNITVITGFFYWIAQCLGSIVACLLLVFVTNGESVPTHGVAAGLGAIEGVVMEIVVTFALVYTVYATAADPKKGSLGTIAPIAIGFIVGANILAAGPFSGGSMNPARSFGPAVVSGDFSQIWIYWVGPLVGGALAGLIYGDVFIGSYAPAPTTESYP</sequence>
<protein>
    <recommendedName>
        <fullName>Probable aquaporin TIP2-2</fullName>
    </recommendedName>
    <alternativeName>
        <fullName>Tonoplast intrinsic protein 2-2</fullName>
        <shortName>AtTIP2;2</shortName>
    </alternativeName>
</protein>
<comment type="function">
    <text evidence="1">Aquaporins facilitate the transport of water and small neutral solutes across cell membranes.</text>
</comment>
<comment type="subunit">
    <text evidence="7">Interacts with cucumber mosaic virus (CMV) Protein 1a.</text>
</comment>
<comment type="subcellular location">
    <subcellularLocation>
        <location evidence="5">Vacuole membrane</location>
        <topology evidence="5">Multi-pass membrane protein</topology>
    </subcellularLocation>
    <text>Tonoplast.</text>
</comment>
<comment type="tissue specificity">
    <text evidence="6">Expressed above groung and in roots.</text>
</comment>
<comment type="domain">
    <text>Aquaporins contain two tandem repeats each containing three membrane-spanning domains and a pore-forming loop with the signature motif Asn-Pro-Ala (NPA).</text>
</comment>
<comment type="similarity">
    <text evidence="8">Belongs to the MIP/aquaporin (TC 1.A.8) family. TIP (TC 1.A.8.10) subfamily.</text>
</comment>
<feature type="chain" id="PRO_0000064012" description="Probable aquaporin TIP2-2">
    <location>
        <begin position="1"/>
        <end position="250"/>
    </location>
</feature>
<feature type="topological domain" description="Cytoplasmic" evidence="4">
    <location>
        <begin position="1"/>
        <end position="24"/>
    </location>
</feature>
<feature type="transmembrane region" description="Helical; Name=1" evidence="4">
    <location>
        <begin position="25"/>
        <end position="45"/>
    </location>
</feature>
<feature type="topological domain" description="Vacuolar" evidence="4">
    <location>
        <begin position="46"/>
        <end position="53"/>
    </location>
</feature>
<feature type="transmembrane region" description="Helical; Name=2" evidence="4">
    <location>
        <begin position="54"/>
        <end position="74"/>
    </location>
</feature>
<feature type="topological domain" description="Cytoplasmic" evidence="4">
    <location>
        <begin position="75"/>
        <end position="101"/>
    </location>
</feature>
<feature type="transmembrane region" description="Helical; Name=3" evidence="4">
    <location>
        <begin position="102"/>
        <end position="122"/>
    </location>
</feature>
<feature type="topological domain" description="Vacuolar" evidence="4">
    <location>
        <begin position="123"/>
        <end position="133"/>
    </location>
</feature>
<feature type="transmembrane region" description="Helical; Name=4" evidence="4">
    <location>
        <begin position="134"/>
        <end position="154"/>
    </location>
</feature>
<feature type="topological domain" description="Cytoplasmic" evidence="4">
    <location>
        <begin position="155"/>
        <end position="168"/>
    </location>
</feature>
<feature type="transmembrane region" description="Helical; Name=5" evidence="4">
    <location>
        <begin position="169"/>
        <end position="189"/>
    </location>
</feature>
<feature type="topological domain" description="Vacuolar" evidence="4">
    <location>
        <begin position="190"/>
        <end position="210"/>
    </location>
</feature>
<feature type="transmembrane region" description="Helical; Name=6" evidence="4">
    <location>
        <begin position="211"/>
        <end position="231"/>
    </location>
</feature>
<feature type="topological domain" description="Cytoplasmic" evidence="4">
    <location>
        <begin position="232"/>
        <end position="250"/>
    </location>
</feature>
<feature type="short sequence motif" description="NPA 1">
    <location>
        <begin position="83"/>
        <end position="85"/>
    </location>
</feature>
<feature type="short sequence motif" description="NPA 2">
    <location>
        <begin position="197"/>
        <end position="199"/>
    </location>
</feature>
<feature type="modified residue" description="N-acetylmethionine" evidence="3">
    <location>
        <position position="1"/>
    </location>
</feature>
<feature type="modified residue" description="N6,N6-dimethyllysine" evidence="2">
    <location>
        <position position="3"/>
    </location>
</feature>
<feature type="modified residue" description="Phosphoserine" evidence="2">
    <location>
        <position position="248"/>
    </location>
</feature>
<accession>Q41975</accession>
<accession>O23577</accession>
<name>TIP22_ARATH</name>
<keyword id="KW-0007">Acetylation</keyword>
<keyword id="KW-0472">Membrane</keyword>
<keyword id="KW-0488">Methylation</keyword>
<keyword id="KW-0597">Phosphoprotein</keyword>
<keyword id="KW-1185">Reference proteome</keyword>
<keyword id="KW-0677">Repeat</keyword>
<keyword id="KW-0812">Transmembrane</keyword>
<keyword id="KW-1133">Transmembrane helix</keyword>
<keyword id="KW-0813">Transport</keyword>
<keyword id="KW-0926">Vacuole</keyword>
<dbReference type="EMBL" id="Z97343">
    <property type="protein sequence ID" value="CAB10515.1"/>
    <property type="molecule type" value="Genomic_DNA"/>
</dbReference>
<dbReference type="EMBL" id="AL161546">
    <property type="protein sequence ID" value="CAB78737.1"/>
    <property type="molecule type" value="Genomic_DNA"/>
</dbReference>
<dbReference type="EMBL" id="CP002687">
    <property type="protein sequence ID" value="AEE83878.1"/>
    <property type="molecule type" value="Genomic_DNA"/>
</dbReference>
<dbReference type="EMBL" id="AY056063">
    <property type="protein sequence ID" value="AAL06963.1"/>
    <property type="molecule type" value="mRNA"/>
</dbReference>
<dbReference type="EMBL" id="AF367283">
    <property type="protein sequence ID" value="AAK56272.1"/>
    <property type="molecule type" value="mRNA"/>
</dbReference>
<dbReference type="EMBL" id="AY088929">
    <property type="protein sequence ID" value="AAM67235.1"/>
    <property type="molecule type" value="mRNA"/>
</dbReference>
<dbReference type="EMBL" id="Z18142">
    <property type="protein sequence ID" value="CAA79115.1"/>
    <property type="molecule type" value="mRNA"/>
</dbReference>
<dbReference type="PIR" id="F71442">
    <property type="entry name" value="F71442"/>
</dbReference>
<dbReference type="RefSeq" id="NP_193465.1">
    <property type="nucleotide sequence ID" value="NM_117838.4"/>
</dbReference>
<dbReference type="SMR" id="Q41975"/>
<dbReference type="BioGRID" id="12739">
    <property type="interactions" value="12"/>
</dbReference>
<dbReference type="FunCoup" id="Q41975">
    <property type="interactions" value="479"/>
</dbReference>
<dbReference type="IntAct" id="Q41975">
    <property type="interactions" value="10"/>
</dbReference>
<dbReference type="STRING" id="3702.Q41975"/>
<dbReference type="PaxDb" id="3702-AT4G17340.1"/>
<dbReference type="ProteomicsDB" id="246429"/>
<dbReference type="EnsemblPlants" id="AT4G17340.1">
    <property type="protein sequence ID" value="AT4G17340.1"/>
    <property type="gene ID" value="AT4G17340"/>
</dbReference>
<dbReference type="GeneID" id="827446"/>
<dbReference type="Gramene" id="AT4G17340.1">
    <property type="protein sequence ID" value="AT4G17340.1"/>
    <property type="gene ID" value="AT4G17340"/>
</dbReference>
<dbReference type="KEGG" id="ath:AT4G17340"/>
<dbReference type="Araport" id="AT4G17340"/>
<dbReference type="TAIR" id="AT4G17340">
    <property type="gene designation" value="TIP2"/>
</dbReference>
<dbReference type="eggNOG" id="KOG0223">
    <property type="taxonomic scope" value="Eukaryota"/>
</dbReference>
<dbReference type="HOGENOM" id="CLU_020019_3_4_1"/>
<dbReference type="InParanoid" id="Q41975"/>
<dbReference type="OMA" id="HINPAMS"/>
<dbReference type="OrthoDB" id="3222at2759"/>
<dbReference type="PhylomeDB" id="Q41975"/>
<dbReference type="PRO" id="PR:Q41975"/>
<dbReference type="Proteomes" id="UP000006548">
    <property type="component" value="Chromosome 4"/>
</dbReference>
<dbReference type="ExpressionAtlas" id="Q41975">
    <property type="expression patterns" value="baseline and differential"/>
</dbReference>
<dbReference type="GO" id="GO:0042807">
    <property type="term" value="C:central vacuole"/>
    <property type="evidence" value="ECO:0000314"/>
    <property type="project" value="TAIR"/>
</dbReference>
<dbReference type="GO" id="GO:0000325">
    <property type="term" value="C:plant-type vacuole"/>
    <property type="evidence" value="ECO:0007005"/>
    <property type="project" value="TAIR"/>
</dbReference>
<dbReference type="GO" id="GO:0009705">
    <property type="term" value="C:plant-type vacuole membrane"/>
    <property type="evidence" value="ECO:0000314"/>
    <property type="project" value="TAIR"/>
</dbReference>
<dbReference type="GO" id="GO:0015267">
    <property type="term" value="F:channel activity"/>
    <property type="evidence" value="ECO:0007669"/>
    <property type="project" value="InterPro"/>
</dbReference>
<dbReference type="CDD" id="cd00333">
    <property type="entry name" value="MIP"/>
    <property type="match status" value="1"/>
</dbReference>
<dbReference type="FunFam" id="1.20.1080.10:FF:000002">
    <property type="entry name" value="Probable aquaporin TIP1-1"/>
    <property type="match status" value="1"/>
</dbReference>
<dbReference type="Gene3D" id="1.20.1080.10">
    <property type="entry name" value="Glycerol uptake facilitator protein"/>
    <property type="match status" value="1"/>
</dbReference>
<dbReference type="InterPro" id="IPR023271">
    <property type="entry name" value="Aquaporin-like"/>
</dbReference>
<dbReference type="InterPro" id="IPR034294">
    <property type="entry name" value="Aquaporin_transptr"/>
</dbReference>
<dbReference type="InterPro" id="IPR000425">
    <property type="entry name" value="MIP"/>
</dbReference>
<dbReference type="InterPro" id="IPR022357">
    <property type="entry name" value="MIP_CS"/>
</dbReference>
<dbReference type="NCBIfam" id="TIGR00861">
    <property type="entry name" value="MIP"/>
    <property type="match status" value="1"/>
</dbReference>
<dbReference type="PANTHER" id="PTHR45665:SF37">
    <property type="entry name" value="AQUAPORIN TIP2-3-RELATED"/>
    <property type="match status" value="1"/>
</dbReference>
<dbReference type="PANTHER" id="PTHR45665">
    <property type="entry name" value="AQUAPORIN-8"/>
    <property type="match status" value="1"/>
</dbReference>
<dbReference type="Pfam" id="PF00230">
    <property type="entry name" value="MIP"/>
    <property type="match status" value="1"/>
</dbReference>
<dbReference type="PRINTS" id="PR00783">
    <property type="entry name" value="MINTRINSICP"/>
</dbReference>
<dbReference type="SUPFAM" id="SSF81338">
    <property type="entry name" value="Aquaporin-like"/>
    <property type="match status" value="1"/>
</dbReference>
<dbReference type="PROSITE" id="PS00221">
    <property type="entry name" value="MIP"/>
    <property type="match status" value="1"/>
</dbReference>